<name>PPIL4_HUMAN</name>
<organism>
    <name type="scientific">Homo sapiens</name>
    <name type="common">Human</name>
    <dbReference type="NCBI Taxonomy" id="9606"/>
    <lineage>
        <taxon>Eukaryota</taxon>
        <taxon>Metazoa</taxon>
        <taxon>Chordata</taxon>
        <taxon>Craniata</taxon>
        <taxon>Vertebrata</taxon>
        <taxon>Euteleostomi</taxon>
        <taxon>Mammalia</taxon>
        <taxon>Eutheria</taxon>
        <taxon>Euarchontoglires</taxon>
        <taxon>Primates</taxon>
        <taxon>Haplorrhini</taxon>
        <taxon>Catarrhini</taxon>
        <taxon>Hominidae</taxon>
        <taxon>Homo</taxon>
    </lineage>
</organism>
<sequence>MAVLLETTLGDVVIDLYTEERPRACLNFLKLCKIKYYNYCLIHNVQRDFIIQTGDPTGTGRGGESIFGQLYGDQASFFEAEKVPRIKHKKKGTVSMVNNGSDQHGSQFLITTGENLDYLDGVHTVFGEVTEGMDIIKKINETFVDKDFVPYQDIRINHTVILDDPFDDPPDLLIPDRSPEPTREQLDSGRIGADEEIDDFKGRSAEEVEEIKAEKEAKTQAILLEMVGDLPDADIKPPENVLFVCKLNPVTTDEDLEIIFSRFGPIRSCEVIRDWKTGESLCYAFIEFEKEEDCEKAFFKMDNVLIDDRRIHVDFSQSVAKVKWKGKGGKYTKSDFKEYEKEQDKPPNLVLKDKVKPKQDTKYDLILDEQAEDSKSSHSHTSKKHKKKTHHCSEEKEDEDYMPIKNTNQDIYREMGFGHYEEEESCWEKQKSEKRDRTQNRSRSRSRERDGHYSNSHKSKYQTDLYERERSKKRDRSRSPKKSKDKEKSKYR</sequence>
<feature type="chain" id="PRO_0000233052" description="Peptidyl-prolyl cis-trans isomerase-like 4">
    <location>
        <begin position="1"/>
        <end position="492"/>
    </location>
</feature>
<feature type="domain" description="PPIase cyclophilin-type" evidence="3">
    <location>
        <begin position="1"/>
        <end position="161"/>
    </location>
</feature>
<feature type="domain" description="RRM" evidence="4">
    <location>
        <begin position="240"/>
        <end position="318"/>
    </location>
</feature>
<feature type="region of interest" description="Disordered" evidence="5">
    <location>
        <begin position="167"/>
        <end position="188"/>
    </location>
</feature>
<feature type="region of interest" description="Disordered" evidence="5">
    <location>
        <begin position="368"/>
        <end position="406"/>
    </location>
</feature>
<feature type="region of interest" description="Disordered" evidence="5">
    <location>
        <begin position="423"/>
        <end position="492"/>
    </location>
</feature>
<feature type="compositionally biased region" description="Basic and acidic residues" evidence="5">
    <location>
        <begin position="177"/>
        <end position="187"/>
    </location>
</feature>
<feature type="compositionally biased region" description="Basic residues" evidence="5">
    <location>
        <begin position="377"/>
        <end position="390"/>
    </location>
</feature>
<feature type="compositionally biased region" description="Basic and acidic residues" evidence="5">
    <location>
        <begin position="426"/>
        <end position="452"/>
    </location>
</feature>
<feature type="compositionally biased region" description="Basic and acidic residues" evidence="5">
    <location>
        <begin position="482"/>
        <end position="492"/>
    </location>
</feature>
<feature type="modified residue" description="Phosphoserine" evidence="8 9 10 11 12 13 14">
    <location>
        <position position="178"/>
    </location>
</feature>
<feature type="modified residue" description="Phosphothreonine" evidence="15">
    <location>
        <position position="182"/>
    </location>
</feature>
<feature type="modified residue" description="Phosphoserine" evidence="2">
    <location>
        <position position="393"/>
    </location>
</feature>
<feature type="modified residue" description="Phosphoserine" evidence="14">
    <location>
        <position position="471"/>
    </location>
</feature>
<feature type="cross-link" description="Glycyl lysine isopeptide (Lys-Gly) (interchain with G-Cter in SUMO2)" evidence="16">
    <location>
        <position position="201"/>
    </location>
</feature>
<feature type="cross-link" description="Glycyl lysine isopeptide (Lys-Gly) (interchain with G-Cter in SUMO2)" evidence="16">
    <location>
        <position position="212"/>
    </location>
</feature>
<feature type="cross-link" description="Glycyl lysine isopeptide (Lys-Gly) (interchain with G-Cter in SUMO2)" evidence="16">
    <location>
        <position position="218"/>
    </location>
</feature>
<feature type="cross-link" description="Glycyl lysine isopeptide (Lys-Gly) (interchain with G-Cter in SUMO2)" evidence="16">
    <location>
        <position position="321"/>
    </location>
</feature>
<feature type="cross-link" description="Glycyl lysine isopeptide (Lys-Gly) (interchain with G-Cter in SUMO2)" evidence="16">
    <location>
        <position position="362"/>
    </location>
</feature>
<feature type="cross-link" description="Glycyl lysine isopeptide (Lys-Gly) (interchain with G-Cter in SUMO2)" evidence="16">
    <location>
        <position position="405"/>
    </location>
</feature>
<feature type="cross-link" description="Glycyl lysine isopeptide (Lys-Gly) (interchain with G-Cter in SUMO2)" evidence="16">
    <location>
        <position position="460"/>
    </location>
</feature>
<feature type="sequence conflict" description="In Ref. 3; CAD97776." evidence="7" ref="3">
    <original>T</original>
    <variation>A</variation>
    <location>
        <position position="389"/>
    </location>
</feature>
<feature type="strand" evidence="17">
    <location>
        <begin position="3"/>
        <end position="7"/>
    </location>
</feature>
<feature type="strand" evidence="17">
    <location>
        <begin position="10"/>
        <end position="16"/>
    </location>
</feature>
<feature type="turn" evidence="17">
    <location>
        <begin position="18"/>
        <end position="20"/>
    </location>
</feature>
<feature type="helix" evidence="17">
    <location>
        <begin position="22"/>
        <end position="33"/>
    </location>
</feature>
<feature type="turn" evidence="17">
    <location>
        <begin position="34"/>
        <end position="37"/>
    </location>
</feature>
<feature type="strand" evidence="17">
    <location>
        <begin position="38"/>
        <end position="41"/>
    </location>
</feature>
<feature type="strand" evidence="17">
    <location>
        <begin position="44"/>
        <end position="46"/>
    </location>
</feature>
<feature type="turn" evidence="17">
    <location>
        <begin position="47"/>
        <end position="49"/>
    </location>
</feature>
<feature type="strand" evidence="17">
    <location>
        <begin position="50"/>
        <end position="53"/>
    </location>
</feature>
<feature type="strand" evidence="17">
    <location>
        <begin position="56"/>
        <end position="61"/>
    </location>
</feature>
<feature type="strand" evidence="17">
    <location>
        <begin position="93"/>
        <end position="96"/>
    </location>
</feature>
<feature type="strand" evidence="17">
    <location>
        <begin position="100"/>
        <end position="102"/>
    </location>
</feature>
<feature type="strand" evidence="17">
    <location>
        <begin position="108"/>
        <end position="111"/>
    </location>
</feature>
<feature type="strand" evidence="17">
    <location>
        <begin position="113"/>
        <end position="115"/>
    </location>
</feature>
<feature type="turn" evidence="17">
    <location>
        <begin position="120"/>
        <end position="122"/>
    </location>
</feature>
<feature type="strand" evidence="17">
    <location>
        <begin position="123"/>
        <end position="131"/>
    </location>
</feature>
<feature type="helix" evidence="17">
    <location>
        <begin position="133"/>
        <end position="140"/>
    </location>
</feature>
<feature type="strand" evidence="17">
    <location>
        <begin position="155"/>
        <end position="161"/>
    </location>
</feature>
<feature type="helix" evidence="17">
    <location>
        <begin position="205"/>
        <end position="227"/>
    </location>
</feature>
<feature type="strand" evidence="17">
    <location>
        <begin position="228"/>
        <end position="230"/>
    </location>
</feature>
<feature type="strand" evidence="17">
    <location>
        <begin position="232"/>
        <end position="234"/>
    </location>
</feature>
<feature type="strand" evidence="17">
    <location>
        <begin position="239"/>
        <end position="246"/>
    </location>
</feature>
<feature type="helix" evidence="17">
    <location>
        <begin position="253"/>
        <end position="260"/>
    </location>
</feature>
<feature type="strand" evidence="17">
    <location>
        <begin position="266"/>
        <end position="273"/>
    </location>
</feature>
<feature type="strand" evidence="17">
    <location>
        <begin position="275"/>
        <end position="277"/>
    </location>
</feature>
<feature type="strand" evidence="17">
    <location>
        <begin position="280"/>
        <end position="289"/>
    </location>
</feature>
<feature type="helix" evidence="17">
    <location>
        <begin position="291"/>
        <end position="298"/>
    </location>
</feature>
<feature type="strand" evidence="17">
    <location>
        <begin position="308"/>
        <end position="314"/>
    </location>
</feature>
<accession>Q8WUA2</accession>
<accession>B2RD34</accession>
<accession>Q7Z3Q5</accession>
<gene>
    <name type="primary">PPIL4</name>
</gene>
<reference key="1">
    <citation type="journal article" date="2001" name="Cytogenet. Cell Genet.">
        <title>Molecular cloning, structure and expression of a novel nuclear RNA-binding cyclophilin-like gene (PPIL4) from human fetal brain.</title>
        <authorList>
            <person name="Zeng L."/>
            <person name="Zhou Z."/>
            <person name="Xu J."/>
            <person name="Zhao W."/>
            <person name="Wang W."/>
            <person name="Huang Y."/>
            <person name="Cheng C."/>
            <person name="Xu M."/>
            <person name="Xie Y."/>
            <person name="Mao Y."/>
        </authorList>
    </citation>
    <scope>NUCLEOTIDE SEQUENCE [MRNA]</scope>
    <scope>TISSUE SPECIFICITY</scope>
    <source>
        <tissue>Fetal brain</tissue>
    </source>
</reference>
<reference key="2">
    <citation type="journal article" date="2004" name="Nat. Genet.">
        <title>Complete sequencing and characterization of 21,243 full-length human cDNAs.</title>
        <authorList>
            <person name="Ota T."/>
            <person name="Suzuki Y."/>
            <person name="Nishikawa T."/>
            <person name="Otsuki T."/>
            <person name="Sugiyama T."/>
            <person name="Irie R."/>
            <person name="Wakamatsu A."/>
            <person name="Hayashi K."/>
            <person name="Sato H."/>
            <person name="Nagai K."/>
            <person name="Kimura K."/>
            <person name="Makita H."/>
            <person name="Sekine M."/>
            <person name="Obayashi M."/>
            <person name="Nishi T."/>
            <person name="Shibahara T."/>
            <person name="Tanaka T."/>
            <person name="Ishii S."/>
            <person name="Yamamoto J."/>
            <person name="Saito K."/>
            <person name="Kawai Y."/>
            <person name="Isono Y."/>
            <person name="Nakamura Y."/>
            <person name="Nagahari K."/>
            <person name="Murakami K."/>
            <person name="Yasuda T."/>
            <person name="Iwayanagi T."/>
            <person name="Wagatsuma M."/>
            <person name="Shiratori A."/>
            <person name="Sudo H."/>
            <person name="Hosoiri T."/>
            <person name="Kaku Y."/>
            <person name="Kodaira H."/>
            <person name="Kondo H."/>
            <person name="Sugawara M."/>
            <person name="Takahashi M."/>
            <person name="Kanda K."/>
            <person name="Yokoi T."/>
            <person name="Furuya T."/>
            <person name="Kikkawa E."/>
            <person name="Omura Y."/>
            <person name="Abe K."/>
            <person name="Kamihara K."/>
            <person name="Katsuta N."/>
            <person name="Sato K."/>
            <person name="Tanikawa M."/>
            <person name="Yamazaki M."/>
            <person name="Ninomiya K."/>
            <person name="Ishibashi T."/>
            <person name="Yamashita H."/>
            <person name="Murakawa K."/>
            <person name="Fujimori K."/>
            <person name="Tanai H."/>
            <person name="Kimata M."/>
            <person name="Watanabe M."/>
            <person name="Hiraoka S."/>
            <person name="Chiba Y."/>
            <person name="Ishida S."/>
            <person name="Ono Y."/>
            <person name="Takiguchi S."/>
            <person name="Watanabe S."/>
            <person name="Yosida M."/>
            <person name="Hotuta T."/>
            <person name="Kusano J."/>
            <person name="Kanehori K."/>
            <person name="Takahashi-Fujii A."/>
            <person name="Hara H."/>
            <person name="Tanase T.-O."/>
            <person name="Nomura Y."/>
            <person name="Togiya S."/>
            <person name="Komai F."/>
            <person name="Hara R."/>
            <person name="Takeuchi K."/>
            <person name="Arita M."/>
            <person name="Imose N."/>
            <person name="Musashino K."/>
            <person name="Yuuki H."/>
            <person name="Oshima A."/>
            <person name="Sasaki N."/>
            <person name="Aotsuka S."/>
            <person name="Yoshikawa Y."/>
            <person name="Matsunawa H."/>
            <person name="Ichihara T."/>
            <person name="Shiohata N."/>
            <person name="Sano S."/>
            <person name="Moriya S."/>
            <person name="Momiyama H."/>
            <person name="Satoh N."/>
            <person name="Takami S."/>
            <person name="Terashima Y."/>
            <person name="Suzuki O."/>
            <person name="Nakagawa S."/>
            <person name="Senoh A."/>
            <person name="Mizoguchi H."/>
            <person name="Goto Y."/>
            <person name="Shimizu F."/>
            <person name="Wakebe H."/>
            <person name="Hishigaki H."/>
            <person name="Watanabe T."/>
            <person name="Sugiyama A."/>
            <person name="Takemoto M."/>
            <person name="Kawakami B."/>
            <person name="Yamazaki M."/>
            <person name="Watanabe K."/>
            <person name="Kumagai A."/>
            <person name="Itakura S."/>
            <person name="Fukuzumi Y."/>
            <person name="Fujimori Y."/>
            <person name="Komiyama M."/>
            <person name="Tashiro H."/>
            <person name="Tanigami A."/>
            <person name="Fujiwara T."/>
            <person name="Ono T."/>
            <person name="Yamada K."/>
            <person name="Fujii Y."/>
            <person name="Ozaki K."/>
            <person name="Hirao M."/>
            <person name="Ohmori Y."/>
            <person name="Kawabata A."/>
            <person name="Hikiji T."/>
            <person name="Kobatake N."/>
            <person name="Inagaki H."/>
            <person name="Ikema Y."/>
            <person name="Okamoto S."/>
            <person name="Okitani R."/>
            <person name="Kawakami T."/>
            <person name="Noguchi S."/>
            <person name="Itoh T."/>
            <person name="Shigeta K."/>
            <person name="Senba T."/>
            <person name="Matsumura K."/>
            <person name="Nakajima Y."/>
            <person name="Mizuno T."/>
            <person name="Morinaga M."/>
            <person name="Sasaki M."/>
            <person name="Togashi T."/>
            <person name="Oyama M."/>
            <person name="Hata H."/>
            <person name="Watanabe M."/>
            <person name="Komatsu T."/>
            <person name="Mizushima-Sugano J."/>
            <person name="Satoh T."/>
            <person name="Shirai Y."/>
            <person name="Takahashi Y."/>
            <person name="Nakagawa K."/>
            <person name="Okumura K."/>
            <person name="Nagase T."/>
            <person name="Nomura N."/>
            <person name="Kikuchi H."/>
            <person name="Masuho Y."/>
            <person name="Yamashita R."/>
            <person name="Nakai K."/>
            <person name="Yada T."/>
            <person name="Nakamura Y."/>
            <person name="Ohara O."/>
            <person name="Isogai T."/>
            <person name="Sugano S."/>
        </authorList>
    </citation>
    <scope>NUCLEOTIDE SEQUENCE [LARGE SCALE MRNA]</scope>
    <source>
        <tissue>Hippocampus</tissue>
    </source>
</reference>
<reference key="3">
    <citation type="journal article" date="2007" name="BMC Genomics">
        <title>The full-ORF clone resource of the German cDNA consortium.</title>
        <authorList>
            <person name="Bechtel S."/>
            <person name="Rosenfelder H."/>
            <person name="Duda A."/>
            <person name="Schmidt C.P."/>
            <person name="Ernst U."/>
            <person name="Wellenreuther R."/>
            <person name="Mehrle A."/>
            <person name="Schuster C."/>
            <person name="Bahr A."/>
            <person name="Bloecker H."/>
            <person name="Heubner D."/>
            <person name="Hoerlein A."/>
            <person name="Michel G."/>
            <person name="Wedler H."/>
            <person name="Koehrer K."/>
            <person name="Ottenwaelder B."/>
            <person name="Poustka A."/>
            <person name="Wiemann S."/>
            <person name="Schupp I."/>
        </authorList>
    </citation>
    <scope>NUCLEOTIDE SEQUENCE [LARGE SCALE MRNA]</scope>
    <source>
        <tissue>Bone marrow</tissue>
    </source>
</reference>
<reference key="4">
    <citation type="journal article" date="2003" name="Nature">
        <title>The DNA sequence and analysis of human chromosome 6.</title>
        <authorList>
            <person name="Mungall A.J."/>
            <person name="Palmer S.A."/>
            <person name="Sims S.K."/>
            <person name="Edwards C.A."/>
            <person name="Ashurst J.L."/>
            <person name="Wilming L."/>
            <person name="Jones M.C."/>
            <person name="Horton R."/>
            <person name="Hunt S.E."/>
            <person name="Scott C.E."/>
            <person name="Gilbert J.G.R."/>
            <person name="Clamp M.E."/>
            <person name="Bethel G."/>
            <person name="Milne S."/>
            <person name="Ainscough R."/>
            <person name="Almeida J.P."/>
            <person name="Ambrose K.D."/>
            <person name="Andrews T.D."/>
            <person name="Ashwell R.I.S."/>
            <person name="Babbage A.K."/>
            <person name="Bagguley C.L."/>
            <person name="Bailey J."/>
            <person name="Banerjee R."/>
            <person name="Barker D.J."/>
            <person name="Barlow K.F."/>
            <person name="Bates K."/>
            <person name="Beare D.M."/>
            <person name="Beasley H."/>
            <person name="Beasley O."/>
            <person name="Bird C.P."/>
            <person name="Blakey S.E."/>
            <person name="Bray-Allen S."/>
            <person name="Brook J."/>
            <person name="Brown A.J."/>
            <person name="Brown J.Y."/>
            <person name="Burford D.C."/>
            <person name="Burrill W."/>
            <person name="Burton J."/>
            <person name="Carder C."/>
            <person name="Carter N.P."/>
            <person name="Chapman J.C."/>
            <person name="Clark S.Y."/>
            <person name="Clark G."/>
            <person name="Clee C.M."/>
            <person name="Clegg S."/>
            <person name="Cobley V."/>
            <person name="Collier R.E."/>
            <person name="Collins J.E."/>
            <person name="Colman L.K."/>
            <person name="Corby N.R."/>
            <person name="Coville G.J."/>
            <person name="Culley K.M."/>
            <person name="Dhami P."/>
            <person name="Davies J."/>
            <person name="Dunn M."/>
            <person name="Earthrowl M.E."/>
            <person name="Ellington A.E."/>
            <person name="Evans K.A."/>
            <person name="Faulkner L."/>
            <person name="Francis M.D."/>
            <person name="Frankish A."/>
            <person name="Frankland J."/>
            <person name="French L."/>
            <person name="Garner P."/>
            <person name="Garnett J."/>
            <person name="Ghori M.J."/>
            <person name="Gilby L.M."/>
            <person name="Gillson C.J."/>
            <person name="Glithero R.J."/>
            <person name="Grafham D.V."/>
            <person name="Grant M."/>
            <person name="Gribble S."/>
            <person name="Griffiths C."/>
            <person name="Griffiths M.N.D."/>
            <person name="Hall R."/>
            <person name="Halls K.S."/>
            <person name="Hammond S."/>
            <person name="Harley J.L."/>
            <person name="Hart E.A."/>
            <person name="Heath P.D."/>
            <person name="Heathcott R."/>
            <person name="Holmes S.J."/>
            <person name="Howden P.J."/>
            <person name="Howe K.L."/>
            <person name="Howell G.R."/>
            <person name="Huckle E."/>
            <person name="Humphray S.J."/>
            <person name="Humphries M.D."/>
            <person name="Hunt A.R."/>
            <person name="Johnson C.M."/>
            <person name="Joy A.A."/>
            <person name="Kay M."/>
            <person name="Keenan S.J."/>
            <person name="Kimberley A.M."/>
            <person name="King A."/>
            <person name="Laird G.K."/>
            <person name="Langford C."/>
            <person name="Lawlor S."/>
            <person name="Leongamornlert D.A."/>
            <person name="Leversha M."/>
            <person name="Lloyd C.R."/>
            <person name="Lloyd D.M."/>
            <person name="Loveland J.E."/>
            <person name="Lovell J."/>
            <person name="Martin S."/>
            <person name="Mashreghi-Mohammadi M."/>
            <person name="Maslen G.L."/>
            <person name="Matthews L."/>
            <person name="McCann O.T."/>
            <person name="McLaren S.J."/>
            <person name="McLay K."/>
            <person name="McMurray A."/>
            <person name="Moore M.J.F."/>
            <person name="Mullikin J.C."/>
            <person name="Niblett D."/>
            <person name="Nickerson T."/>
            <person name="Novik K.L."/>
            <person name="Oliver K."/>
            <person name="Overton-Larty E.K."/>
            <person name="Parker A."/>
            <person name="Patel R."/>
            <person name="Pearce A.V."/>
            <person name="Peck A.I."/>
            <person name="Phillimore B.J.C.T."/>
            <person name="Phillips S."/>
            <person name="Plumb R.W."/>
            <person name="Porter K.M."/>
            <person name="Ramsey Y."/>
            <person name="Ranby S.A."/>
            <person name="Rice C.M."/>
            <person name="Ross M.T."/>
            <person name="Searle S.M."/>
            <person name="Sehra H.K."/>
            <person name="Sheridan E."/>
            <person name="Skuce C.D."/>
            <person name="Smith S."/>
            <person name="Smith M."/>
            <person name="Spraggon L."/>
            <person name="Squares S.L."/>
            <person name="Steward C.A."/>
            <person name="Sycamore N."/>
            <person name="Tamlyn-Hall G."/>
            <person name="Tester J."/>
            <person name="Theaker A.J."/>
            <person name="Thomas D.W."/>
            <person name="Thorpe A."/>
            <person name="Tracey A."/>
            <person name="Tromans A."/>
            <person name="Tubby B."/>
            <person name="Wall M."/>
            <person name="Wallis J.M."/>
            <person name="West A.P."/>
            <person name="White S.S."/>
            <person name="Whitehead S.L."/>
            <person name="Whittaker H."/>
            <person name="Wild A."/>
            <person name="Willey D.J."/>
            <person name="Wilmer T.E."/>
            <person name="Wood J.M."/>
            <person name="Wray P.W."/>
            <person name="Wyatt J.C."/>
            <person name="Young L."/>
            <person name="Younger R.M."/>
            <person name="Bentley D.R."/>
            <person name="Coulson A."/>
            <person name="Durbin R.M."/>
            <person name="Hubbard T."/>
            <person name="Sulston J.E."/>
            <person name="Dunham I."/>
            <person name="Rogers J."/>
            <person name="Beck S."/>
        </authorList>
    </citation>
    <scope>NUCLEOTIDE SEQUENCE [LARGE SCALE GENOMIC DNA]</scope>
</reference>
<reference key="5">
    <citation type="submission" date="2005-09" db="EMBL/GenBank/DDBJ databases">
        <authorList>
            <person name="Mural R.J."/>
            <person name="Istrail S."/>
            <person name="Sutton G.G."/>
            <person name="Florea L."/>
            <person name="Halpern A.L."/>
            <person name="Mobarry C.M."/>
            <person name="Lippert R."/>
            <person name="Walenz B."/>
            <person name="Shatkay H."/>
            <person name="Dew I."/>
            <person name="Miller J.R."/>
            <person name="Flanigan M.J."/>
            <person name="Edwards N.J."/>
            <person name="Bolanos R."/>
            <person name="Fasulo D."/>
            <person name="Halldorsson B.V."/>
            <person name="Hannenhalli S."/>
            <person name="Turner R."/>
            <person name="Yooseph S."/>
            <person name="Lu F."/>
            <person name="Nusskern D.R."/>
            <person name="Shue B.C."/>
            <person name="Zheng X.H."/>
            <person name="Zhong F."/>
            <person name="Delcher A.L."/>
            <person name="Huson D.H."/>
            <person name="Kravitz S.A."/>
            <person name="Mouchard L."/>
            <person name="Reinert K."/>
            <person name="Remington K.A."/>
            <person name="Clark A.G."/>
            <person name="Waterman M.S."/>
            <person name="Eichler E.E."/>
            <person name="Adams M.D."/>
            <person name="Hunkapiller M.W."/>
            <person name="Myers E.W."/>
            <person name="Venter J.C."/>
        </authorList>
    </citation>
    <scope>NUCLEOTIDE SEQUENCE [LARGE SCALE GENOMIC DNA]</scope>
</reference>
<reference key="6">
    <citation type="journal article" date="2004" name="Genome Res.">
        <title>The status, quality, and expansion of the NIH full-length cDNA project: the Mammalian Gene Collection (MGC).</title>
        <authorList>
            <consortium name="The MGC Project Team"/>
        </authorList>
    </citation>
    <scope>NUCLEOTIDE SEQUENCE [LARGE SCALE MRNA]</scope>
    <source>
        <tissue>Colon</tissue>
    </source>
</reference>
<reference key="7">
    <citation type="journal article" date="2006" name="Cell">
        <title>Global, in vivo, and site-specific phosphorylation dynamics in signaling networks.</title>
        <authorList>
            <person name="Olsen J.V."/>
            <person name="Blagoev B."/>
            <person name="Gnad F."/>
            <person name="Macek B."/>
            <person name="Kumar C."/>
            <person name="Mortensen P."/>
            <person name="Mann M."/>
        </authorList>
    </citation>
    <scope>PHOSPHORYLATION [LARGE SCALE ANALYSIS] AT SER-178</scope>
    <scope>IDENTIFICATION BY MASS SPECTROMETRY [LARGE SCALE ANALYSIS]</scope>
    <source>
        <tissue>Cervix carcinoma</tissue>
    </source>
</reference>
<reference key="8">
    <citation type="journal article" date="2008" name="J. Proteome Res.">
        <title>Combining protein-based IMAC, peptide-based IMAC, and MudPIT for efficient phosphoproteomic analysis.</title>
        <authorList>
            <person name="Cantin G.T."/>
            <person name="Yi W."/>
            <person name="Lu B."/>
            <person name="Park S.K."/>
            <person name="Xu T."/>
            <person name="Lee J.-D."/>
            <person name="Yates J.R. III"/>
        </authorList>
    </citation>
    <scope>PHOSPHORYLATION [LARGE SCALE ANALYSIS] AT SER-178</scope>
    <scope>IDENTIFICATION BY MASS SPECTROMETRY [LARGE SCALE ANALYSIS]</scope>
    <source>
        <tissue>Cervix carcinoma</tissue>
    </source>
</reference>
<reference key="9">
    <citation type="journal article" date="2008" name="Proc. Natl. Acad. Sci. U.S.A.">
        <title>A quantitative atlas of mitotic phosphorylation.</title>
        <authorList>
            <person name="Dephoure N."/>
            <person name="Zhou C."/>
            <person name="Villen J."/>
            <person name="Beausoleil S.A."/>
            <person name="Bakalarski C.E."/>
            <person name="Elledge S.J."/>
            <person name="Gygi S.P."/>
        </authorList>
    </citation>
    <scope>PHOSPHORYLATION [LARGE SCALE ANALYSIS] AT SER-178</scope>
    <scope>IDENTIFICATION BY MASS SPECTROMETRY [LARGE SCALE ANALYSIS]</scope>
    <source>
        <tissue>Cervix carcinoma</tissue>
    </source>
</reference>
<reference key="10">
    <citation type="journal article" date="2009" name="Sci. Signal.">
        <title>Quantitative phosphoproteomic analysis of T cell receptor signaling reveals system-wide modulation of protein-protein interactions.</title>
        <authorList>
            <person name="Mayya V."/>
            <person name="Lundgren D.H."/>
            <person name="Hwang S.-I."/>
            <person name="Rezaul K."/>
            <person name="Wu L."/>
            <person name="Eng J.K."/>
            <person name="Rodionov V."/>
            <person name="Han D.K."/>
        </authorList>
    </citation>
    <scope>PHOSPHORYLATION [LARGE SCALE ANALYSIS] AT SER-178</scope>
    <scope>IDENTIFICATION BY MASS SPECTROMETRY [LARGE SCALE ANALYSIS]</scope>
    <source>
        <tissue>Leukemic T-cell</tissue>
    </source>
</reference>
<reference key="11">
    <citation type="journal article" date="2010" name="Sci. Signal.">
        <title>Quantitative phosphoproteomics reveals widespread full phosphorylation site occupancy during mitosis.</title>
        <authorList>
            <person name="Olsen J.V."/>
            <person name="Vermeulen M."/>
            <person name="Santamaria A."/>
            <person name="Kumar C."/>
            <person name="Miller M.L."/>
            <person name="Jensen L.J."/>
            <person name="Gnad F."/>
            <person name="Cox J."/>
            <person name="Jensen T.S."/>
            <person name="Nigg E.A."/>
            <person name="Brunak S."/>
            <person name="Mann M."/>
        </authorList>
    </citation>
    <scope>PHOSPHORYLATION [LARGE SCALE ANALYSIS] AT SER-178</scope>
    <scope>IDENTIFICATION BY MASS SPECTROMETRY [LARGE SCALE ANALYSIS]</scope>
    <source>
        <tissue>Cervix carcinoma</tissue>
    </source>
</reference>
<reference key="12">
    <citation type="journal article" date="2011" name="BMC Syst. Biol.">
        <title>Initial characterization of the human central proteome.</title>
        <authorList>
            <person name="Burkard T.R."/>
            <person name="Planyavsky M."/>
            <person name="Kaupe I."/>
            <person name="Breitwieser F.P."/>
            <person name="Buerckstuemmer T."/>
            <person name="Bennett K.L."/>
            <person name="Superti-Furga G."/>
            <person name="Colinge J."/>
        </authorList>
    </citation>
    <scope>IDENTIFICATION BY MASS SPECTROMETRY [LARGE SCALE ANALYSIS]</scope>
</reference>
<reference key="13">
    <citation type="journal article" date="2011" name="Sci. Signal.">
        <title>System-wide temporal characterization of the proteome and phosphoproteome of human embryonic stem cell differentiation.</title>
        <authorList>
            <person name="Rigbolt K.T."/>
            <person name="Prokhorova T.A."/>
            <person name="Akimov V."/>
            <person name="Henningsen J."/>
            <person name="Johansen P.T."/>
            <person name="Kratchmarova I."/>
            <person name="Kassem M."/>
            <person name="Mann M."/>
            <person name="Olsen J.V."/>
            <person name="Blagoev B."/>
        </authorList>
    </citation>
    <scope>PHOSPHORYLATION [LARGE SCALE ANALYSIS] AT SER-178</scope>
    <scope>IDENTIFICATION BY MASS SPECTROMETRY [LARGE SCALE ANALYSIS]</scope>
</reference>
<reference key="14">
    <citation type="journal article" date="2013" name="J. Proteome Res.">
        <title>Toward a comprehensive characterization of a human cancer cell phosphoproteome.</title>
        <authorList>
            <person name="Zhou H."/>
            <person name="Di Palma S."/>
            <person name="Preisinger C."/>
            <person name="Peng M."/>
            <person name="Polat A.N."/>
            <person name="Heck A.J."/>
            <person name="Mohammed S."/>
        </authorList>
    </citation>
    <scope>PHOSPHORYLATION [LARGE SCALE ANALYSIS] AT SER-178 AND SER-471</scope>
    <scope>IDENTIFICATION BY MASS SPECTROMETRY [LARGE SCALE ANALYSIS]</scope>
    <source>
        <tissue>Erythroleukemia</tissue>
    </source>
</reference>
<reference key="15">
    <citation type="journal article" date="2014" name="J. Proteomics">
        <title>An enzyme assisted RP-RPLC approach for in-depth analysis of human liver phosphoproteome.</title>
        <authorList>
            <person name="Bian Y."/>
            <person name="Song C."/>
            <person name="Cheng K."/>
            <person name="Dong M."/>
            <person name="Wang F."/>
            <person name="Huang J."/>
            <person name="Sun D."/>
            <person name="Wang L."/>
            <person name="Ye M."/>
            <person name="Zou H."/>
        </authorList>
    </citation>
    <scope>PHOSPHORYLATION [LARGE SCALE ANALYSIS] AT THR-182</scope>
    <scope>IDENTIFICATION BY MASS SPECTROMETRY [LARGE SCALE ANALYSIS]</scope>
    <source>
        <tissue>Liver</tissue>
    </source>
</reference>
<reference key="16">
    <citation type="journal article" date="2017" name="Nat. Struct. Mol. Biol.">
        <title>Site-specific mapping of the human SUMO proteome reveals co-modification with phosphorylation.</title>
        <authorList>
            <person name="Hendriks I.A."/>
            <person name="Lyon D."/>
            <person name="Young C."/>
            <person name="Jensen L.J."/>
            <person name="Vertegaal A.C."/>
            <person name="Nielsen M.L."/>
        </authorList>
    </citation>
    <scope>SUMOYLATION [LARGE SCALE ANALYSIS] AT LYS-201; LYS-212; LYS-218; LYS-321; LYS-362; LYS-405 AND LYS-460</scope>
    <scope>IDENTIFICATION BY MASS SPECTROMETRY [LARGE SCALE ANALYSIS]</scope>
</reference>
<keyword id="KW-0002">3D-structure</keyword>
<keyword id="KW-0413">Isomerase</keyword>
<keyword id="KW-1017">Isopeptide bond</keyword>
<keyword id="KW-0539">Nucleus</keyword>
<keyword id="KW-0597">Phosphoprotein</keyword>
<keyword id="KW-1267">Proteomics identification</keyword>
<keyword id="KW-1185">Reference proteome</keyword>
<keyword id="KW-0694">RNA-binding</keyword>
<keyword id="KW-0697">Rotamase</keyword>
<keyword id="KW-0832">Ubl conjugation</keyword>
<protein>
    <recommendedName>
        <fullName>Peptidyl-prolyl cis-trans isomerase-like 4</fullName>
        <shortName>PPIase</shortName>
        <ecNumber>5.2.1.8</ecNumber>
    </recommendedName>
    <alternativeName>
        <fullName>Cyclophilin-like protein PPIL4</fullName>
    </alternativeName>
    <alternativeName>
        <fullName>Rotamase PPIL4</fullName>
    </alternativeName>
</protein>
<evidence type="ECO:0000250" key="1"/>
<evidence type="ECO:0000250" key="2">
    <source>
        <dbReference type="UniProtKB" id="Q9CXG3"/>
    </source>
</evidence>
<evidence type="ECO:0000255" key="3">
    <source>
        <dbReference type="PROSITE-ProRule" id="PRU00156"/>
    </source>
</evidence>
<evidence type="ECO:0000255" key="4">
    <source>
        <dbReference type="PROSITE-ProRule" id="PRU00176"/>
    </source>
</evidence>
<evidence type="ECO:0000256" key="5">
    <source>
        <dbReference type="SAM" id="MobiDB-lite"/>
    </source>
</evidence>
<evidence type="ECO:0000269" key="6">
    <source>
    </source>
</evidence>
<evidence type="ECO:0000305" key="7"/>
<evidence type="ECO:0007744" key="8">
    <source>
    </source>
</evidence>
<evidence type="ECO:0007744" key="9">
    <source>
    </source>
</evidence>
<evidence type="ECO:0007744" key="10">
    <source>
    </source>
</evidence>
<evidence type="ECO:0007744" key="11">
    <source>
    </source>
</evidence>
<evidence type="ECO:0007744" key="12">
    <source>
    </source>
</evidence>
<evidence type="ECO:0007744" key="13">
    <source>
    </source>
</evidence>
<evidence type="ECO:0007744" key="14">
    <source>
    </source>
</evidence>
<evidence type="ECO:0007744" key="15">
    <source>
    </source>
</evidence>
<evidence type="ECO:0007744" key="16">
    <source>
    </source>
</evidence>
<evidence type="ECO:0007829" key="17">
    <source>
        <dbReference type="PDB" id="7QTT"/>
    </source>
</evidence>
<proteinExistence type="evidence at protein level"/>
<comment type="function">
    <text evidence="1">PPIases accelerate the folding of proteins. It catalyzes the cis-trans isomerization of proline imidic peptide bonds in oligopeptides (By similarity).</text>
</comment>
<comment type="catalytic activity">
    <reaction>
        <text>[protein]-peptidylproline (omega=180) = [protein]-peptidylproline (omega=0)</text>
        <dbReference type="Rhea" id="RHEA:16237"/>
        <dbReference type="Rhea" id="RHEA-COMP:10747"/>
        <dbReference type="Rhea" id="RHEA-COMP:10748"/>
        <dbReference type="ChEBI" id="CHEBI:83833"/>
        <dbReference type="ChEBI" id="CHEBI:83834"/>
        <dbReference type="EC" id="5.2.1.8"/>
    </reaction>
</comment>
<comment type="interaction">
    <interactant intactId="EBI-2513119">
        <id>Q8WUA2</id>
    </interactant>
    <interactant intactId="EBI-80426">
        <id>Q15700</id>
        <label>DLG2</label>
    </interactant>
    <organismsDiffer>false</organismsDiffer>
    <experiments>3</experiments>
</comment>
<comment type="interaction">
    <interactant intactId="EBI-2513119">
        <id>Q8WUA2</id>
    </interactant>
    <interactant intactId="EBI-747278">
        <id>P26367</id>
        <label>PAX6</label>
    </interactant>
    <organismsDiffer>false</organismsDiffer>
    <experiments>3</experiments>
</comment>
<comment type="subcellular location">
    <subcellularLocation>
        <location evidence="7">Nucleus</location>
    </subcellularLocation>
</comment>
<comment type="tissue specificity">
    <text evidence="6">Abundantly expressed in kidney but has a ubiquitously low expression pattern in other adult tissues.</text>
</comment>
<comment type="similarity">
    <text evidence="7">Belongs to the cyclophilin-type PPIase family. PPIL4 subfamily.</text>
</comment>
<dbReference type="EC" id="5.2.1.8"/>
<dbReference type="EMBL" id="AF357880">
    <property type="protein sequence ID" value="AAM63961.1"/>
    <property type="molecule type" value="mRNA"/>
</dbReference>
<dbReference type="EMBL" id="AK315388">
    <property type="protein sequence ID" value="BAG37781.1"/>
    <property type="molecule type" value="mRNA"/>
</dbReference>
<dbReference type="EMBL" id="BX537536">
    <property type="protein sequence ID" value="CAD97776.1"/>
    <property type="molecule type" value="mRNA"/>
</dbReference>
<dbReference type="EMBL" id="AL078581">
    <property type="status" value="NOT_ANNOTATED_CDS"/>
    <property type="molecule type" value="Genomic_DNA"/>
</dbReference>
<dbReference type="EMBL" id="AL357619">
    <property type="status" value="NOT_ANNOTATED_CDS"/>
    <property type="molecule type" value="Genomic_DNA"/>
</dbReference>
<dbReference type="EMBL" id="CH471051">
    <property type="protein sequence ID" value="EAW47799.1"/>
    <property type="molecule type" value="Genomic_DNA"/>
</dbReference>
<dbReference type="EMBL" id="BC020986">
    <property type="protein sequence ID" value="AAH20986.1"/>
    <property type="molecule type" value="mRNA"/>
</dbReference>
<dbReference type="CCDS" id="CCDS34550.1"/>
<dbReference type="RefSeq" id="NP_624311.1">
    <property type="nucleotide sequence ID" value="NM_139126.4"/>
</dbReference>
<dbReference type="PDB" id="7QTT">
    <property type="method" value="EM"/>
    <property type="resolution" value="3.10 A"/>
    <property type="chains" value="V=1-492"/>
</dbReference>
<dbReference type="PDB" id="8CH6">
    <property type="method" value="EM"/>
    <property type="resolution" value="5.90 A"/>
    <property type="chains" value="V=1-492"/>
</dbReference>
<dbReference type="PDB" id="8I0S">
    <property type="method" value="EM"/>
    <property type="resolution" value="4.20 A"/>
    <property type="chains" value="Y=1-492"/>
</dbReference>
<dbReference type="PDB" id="8I0T">
    <property type="method" value="EM"/>
    <property type="resolution" value="3.00 A"/>
    <property type="chains" value="Y=1-492"/>
</dbReference>
<dbReference type="PDB" id="8I0U">
    <property type="method" value="EM"/>
    <property type="resolution" value="3.30 A"/>
    <property type="chains" value="Y=1-492"/>
</dbReference>
<dbReference type="PDB" id="8I0V">
    <property type="method" value="EM"/>
    <property type="resolution" value="3.00 A"/>
    <property type="chains" value="Y=1-492"/>
</dbReference>
<dbReference type="PDBsum" id="7QTT"/>
<dbReference type="PDBsum" id="8CH6"/>
<dbReference type="PDBsum" id="8I0S"/>
<dbReference type="PDBsum" id="8I0T"/>
<dbReference type="PDBsum" id="8I0U"/>
<dbReference type="PDBsum" id="8I0V"/>
<dbReference type="EMDB" id="EMD-14146"/>
<dbReference type="EMDB" id="EMD-16658"/>
<dbReference type="EMDB" id="EMD-35108"/>
<dbReference type="EMDB" id="EMD-35109"/>
<dbReference type="EMDB" id="EMD-35110"/>
<dbReference type="EMDB" id="EMD-35111"/>
<dbReference type="SMR" id="Q8WUA2"/>
<dbReference type="BioGRID" id="124467">
    <property type="interactions" value="179"/>
</dbReference>
<dbReference type="ELM" id="Q8WUA2"/>
<dbReference type="FunCoup" id="Q8WUA2">
    <property type="interactions" value="5481"/>
</dbReference>
<dbReference type="IntAct" id="Q8WUA2">
    <property type="interactions" value="712"/>
</dbReference>
<dbReference type="MINT" id="Q8WUA2"/>
<dbReference type="STRING" id="9606.ENSP00000253329"/>
<dbReference type="GlyGen" id="Q8WUA2">
    <property type="glycosylation" value="1 site, 1 O-linked glycan (1 site)"/>
</dbReference>
<dbReference type="iPTMnet" id="Q8WUA2"/>
<dbReference type="PhosphoSitePlus" id="Q8WUA2"/>
<dbReference type="SwissPalm" id="Q8WUA2"/>
<dbReference type="BioMuta" id="PPIL4"/>
<dbReference type="DMDM" id="74760546"/>
<dbReference type="jPOST" id="Q8WUA2"/>
<dbReference type="MassIVE" id="Q8WUA2"/>
<dbReference type="PaxDb" id="9606-ENSP00000253329"/>
<dbReference type="PeptideAtlas" id="Q8WUA2"/>
<dbReference type="ProteomicsDB" id="74646"/>
<dbReference type="Pumba" id="Q8WUA2"/>
<dbReference type="Antibodypedia" id="33270">
    <property type="antibodies" value="184 antibodies from 27 providers"/>
</dbReference>
<dbReference type="DNASU" id="85313"/>
<dbReference type="Ensembl" id="ENST00000253329.3">
    <property type="protein sequence ID" value="ENSP00000253329.2"/>
    <property type="gene ID" value="ENSG00000131013.4"/>
</dbReference>
<dbReference type="GeneID" id="85313"/>
<dbReference type="KEGG" id="hsa:85313"/>
<dbReference type="MANE-Select" id="ENST00000253329.3">
    <property type="protein sequence ID" value="ENSP00000253329.2"/>
    <property type="RefSeq nucleotide sequence ID" value="NM_139126.4"/>
    <property type="RefSeq protein sequence ID" value="NP_624311.1"/>
</dbReference>
<dbReference type="UCSC" id="uc003qmo.3">
    <property type="organism name" value="human"/>
</dbReference>
<dbReference type="AGR" id="HGNC:15702"/>
<dbReference type="CTD" id="85313"/>
<dbReference type="DisGeNET" id="85313"/>
<dbReference type="GeneCards" id="PPIL4"/>
<dbReference type="HGNC" id="HGNC:15702">
    <property type="gene designation" value="PPIL4"/>
</dbReference>
<dbReference type="HPA" id="ENSG00000131013">
    <property type="expression patterns" value="Low tissue specificity"/>
</dbReference>
<dbReference type="MIM" id="607609">
    <property type="type" value="gene"/>
</dbReference>
<dbReference type="neXtProt" id="NX_Q8WUA2"/>
<dbReference type="OpenTargets" id="ENSG00000131013"/>
<dbReference type="PharmGKB" id="PA33590"/>
<dbReference type="VEuPathDB" id="HostDB:ENSG00000131013"/>
<dbReference type="eggNOG" id="KOG0415">
    <property type="taxonomic scope" value="Eukaryota"/>
</dbReference>
<dbReference type="GeneTree" id="ENSGT00940000156283"/>
<dbReference type="HOGENOM" id="CLU_018791_3_2_1"/>
<dbReference type="InParanoid" id="Q8WUA2"/>
<dbReference type="OMA" id="APKCCEN"/>
<dbReference type="OrthoDB" id="2083at2759"/>
<dbReference type="PAN-GO" id="Q8WUA2">
    <property type="GO annotations" value="2 GO annotations based on evolutionary models"/>
</dbReference>
<dbReference type="PhylomeDB" id="Q8WUA2"/>
<dbReference type="TreeFam" id="TF351865"/>
<dbReference type="PathwayCommons" id="Q8WUA2"/>
<dbReference type="Reactome" id="R-HSA-72163">
    <property type="pathway name" value="mRNA Splicing - Major Pathway"/>
</dbReference>
<dbReference type="SignaLink" id="Q8WUA2"/>
<dbReference type="BioGRID-ORCS" id="85313">
    <property type="hits" value="732 hits in 1163 CRISPR screens"/>
</dbReference>
<dbReference type="ChiTaRS" id="PPIL4">
    <property type="organism name" value="human"/>
</dbReference>
<dbReference type="GeneWiki" id="PPIL4"/>
<dbReference type="GenomeRNAi" id="85313"/>
<dbReference type="Pharos" id="Q8WUA2">
    <property type="development level" value="Tdark"/>
</dbReference>
<dbReference type="PRO" id="PR:Q8WUA2"/>
<dbReference type="Proteomes" id="UP000005640">
    <property type="component" value="Chromosome 6"/>
</dbReference>
<dbReference type="RNAct" id="Q8WUA2">
    <property type="molecule type" value="protein"/>
</dbReference>
<dbReference type="Bgee" id="ENSG00000131013">
    <property type="expression patterns" value="Expressed in calcaneal tendon and 185 other cell types or tissues"/>
</dbReference>
<dbReference type="ExpressionAtlas" id="Q8WUA2">
    <property type="expression patterns" value="baseline and differential"/>
</dbReference>
<dbReference type="GO" id="GO:0005829">
    <property type="term" value="C:cytosol"/>
    <property type="evidence" value="ECO:0000314"/>
    <property type="project" value="HPA"/>
</dbReference>
<dbReference type="GO" id="GO:0005654">
    <property type="term" value="C:nucleoplasm"/>
    <property type="evidence" value="ECO:0000314"/>
    <property type="project" value="HPA"/>
</dbReference>
<dbReference type="GO" id="GO:0005634">
    <property type="term" value="C:nucleus"/>
    <property type="evidence" value="ECO:0000318"/>
    <property type="project" value="GO_Central"/>
</dbReference>
<dbReference type="GO" id="GO:0003755">
    <property type="term" value="F:peptidyl-prolyl cis-trans isomerase activity"/>
    <property type="evidence" value="ECO:0007669"/>
    <property type="project" value="UniProtKB-KW"/>
</dbReference>
<dbReference type="GO" id="GO:0003723">
    <property type="term" value="F:RNA binding"/>
    <property type="evidence" value="ECO:0007005"/>
    <property type="project" value="UniProtKB"/>
</dbReference>
<dbReference type="CDD" id="cd01921">
    <property type="entry name" value="cyclophilin_RRM"/>
    <property type="match status" value="1"/>
</dbReference>
<dbReference type="CDD" id="cd12235">
    <property type="entry name" value="RRM_PPIL4"/>
    <property type="match status" value="1"/>
</dbReference>
<dbReference type="FunFam" id="2.40.100.10:FF:000016">
    <property type="entry name" value="Peptidyl-prolyl cis-trans isomerase"/>
    <property type="match status" value="1"/>
</dbReference>
<dbReference type="FunFam" id="3.30.70.330:FF:000267">
    <property type="entry name" value="Peptidyl-prolyl cis-trans isomerase"/>
    <property type="match status" value="1"/>
</dbReference>
<dbReference type="Gene3D" id="3.30.70.330">
    <property type="match status" value="1"/>
</dbReference>
<dbReference type="Gene3D" id="2.40.100.10">
    <property type="entry name" value="Cyclophilin-like"/>
    <property type="match status" value="1"/>
</dbReference>
<dbReference type="InterPro" id="IPR035542">
    <property type="entry name" value="CRIP"/>
</dbReference>
<dbReference type="InterPro" id="IPR029000">
    <property type="entry name" value="Cyclophilin-like_dom_sf"/>
</dbReference>
<dbReference type="InterPro" id="IPR002130">
    <property type="entry name" value="Cyclophilin-type_PPIase_dom"/>
</dbReference>
<dbReference type="InterPro" id="IPR035538">
    <property type="entry name" value="Cyclophilin_PPIL4"/>
</dbReference>
<dbReference type="InterPro" id="IPR012677">
    <property type="entry name" value="Nucleotide-bd_a/b_plait_sf"/>
</dbReference>
<dbReference type="InterPro" id="IPR035979">
    <property type="entry name" value="RBD_domain_sf"/>
</dbReference>
<dbReference type="InterPro" id="IPR000504">
    <property type="entry name" value="RRM_dom"/>
</dbReference>
<dbReference type="PANTHER" id="PTHR45843">
    <property type="entry name" value="PEPTIDYL-PROLYL CIS-TRANS ISOMERASE-LIKE 4"/>
    <property type="match status" value="1"/>
</dbReference>
<dbReference type="PANTHER" id="PTHR45843:SF1">
    <property type="entry name" value="PEPTIDYL-PROLYL CIS-TRANS ISOMERASE-LIKE 4"/>
    <property type="match status" value="1"/>
</dbReference>
<dbReference type="Pfam" id="PF00160">
    <property type="entry name" value="Pro_isomerase"/>
    <property type="match status" value="1"/>
</dbReference>
<dbReference type="Pfam" id="PF00076">
    <property type="entry name" value="RRM_1"/>
    <property type="match status" value="1"/>
</dbReference>
<dbReference type="PRINTS" id="PR00153">
    <property type="entry name" value="CSAPPISMRASE"/>
</dbReference>
<dbReference type="SMART" id="SM00360">
    <property type="entry name" value="RRM"/>
    <property type="match status" value="1"/>
</dbReference>
<dbReference type="SUPFAM" id="SSF50891">
    <property type="entry name" value="Cyclophilin-like"/>
    <property type="match status" value="1"/>
</dbReference>
<dbReference type="SUPFAM" id="SSF54928">
    <property type="entry name" value="RNA-binding domain, RBD"/>
    <property type="match status" value="1"/>
</dbReference>
<dbReference type="PROSITE" id="PS50072">
    <property type="entry name" value="CSA_PPIASE_2"/>
    <property type="match status" value="1"/>
</dbReference>
<dbReference type="PROSITE" id="PS50102">
    <property type="entry name" value="RRM"/>
    <property type="match status" value="1"/>
</dbReference>